<comment type="function">
    <text evidence="1">Required for the formation of a threonylcarbamoyl group on adenosine at position 37 (t(6)A37) in tRNAs that read codons beginning with adenine. Is involved in the transfer of the threonylcarbamoyl moiety of threonylcarbamoyl-AMP (TC-AMP) to the N6 group of A37, together with TsaE and TsaB. TsaD likely plays a direct catalytic role in this reaction.</text>
</comment>
<comment type="catalytic activity">
    <reaction evidence="1">
        <text>L-threonylcarbamoyladenylate + adenosine(37) in tRNA = N(6)-L-threonylcarbamoyladenosine(37) in tRNA + AMP + H(+)</text>
        <dbReference type="Rhea" id="RHEA:37059"/>
        <dbReference type="Rhea" id="RHEA-COMP:10162"/>
        <dbReference type="Rhea" id="RHEA-COMP:10163"/>
        <dbReference type="ChEBI" id="CHEBI:15378"/>
        <dbReference type="ChEBI" id="CHEBI:73682"/>
        <dbReference type="ChEBI" id="CHEBI:74411"/>
        <dbReference type="ChEBI" id="CHEBI:74418"/>
        <dbReference type="ChEBI" id="CHEBI:456215"/>
        <dbReference type="EC" id="2.3.1.234"/>
    </reaction>
</comment>
<comment type="cofactor">
    <cofactor evidence="1">
        <name>Fe(2+)</name>
        <dbReference type="ChEBI" id="CHEBI:29033"/>
    </cofactor>
    <text evidence="1">Binds 1 Fe(2+) ion per subunit.</text>
</comment>
<comment type="subcellular location">
    <subcellularLocation>
        <location evidence="1">Cytoplasm</location>
    </subcellularLocation>
</comment>
<comment type="similarity">
    <text evidence="1">Belongs to the KAE1 / TsaD family.</text>
</comment>
<dbReference type="EC" id="2.3.1.234" evidence="1"/>
<dbReference type="EMBL" id="CU459141">
    <property type="protein sequence ID" value="CAM86208.1"/>
    <property type="molecule type" value="Genomic_DNA"/>
</dbReference>
<dbReference type="RefSeq" id="WP_000636263.1">
    <property type="nucleotide sequence ID" value="NZ_JBDGFB010000016.1"/>
</dbReference>
<dbReference type="SMR" id="B0V811"/>
<dbReference type="EnsemblBacteria" id="CAM86208">
    <property type="protein sequence ID" value="CAM86208"/>
    <property type="gene ID" value="ABAYE1288"/>
</dbReference>
<dbReference type="GeneID" id="92894503"/>
<dbReference type="KEGG" id="aby:ABAYE1288"/>
<dbReference type="HOGENOM" id="CLU_023208_0_0_6"/>
<dbReference type="GO" id="GO:0005737">
    <property type="term" value="C:cytoplasm"/>
    <property type="evidence" value="ECO:0007669"/>
    <property type="project" value="UniProtKB-SubCell"/>
</dbReference>
<dbReference type="GO" id="GO:0005506">
    <property type="term" value="F:iron ion binding"/>
    <property type="evidence" value="ECO:0007669"/>
    <property type="project" value="UniProtKB-UniRule"/>
</dbReference>
<dbReference type="GO" id="GO:0061711">
    <property type="term" value="F:N(6)-L-threonylcarbamoyladenine synthase activity"/>
    <property type="evidence" value="ECO:0007669"/>
    <property type="project" value="UniProtKB-EC"/>
</dbReference>
<dbReference type="GO" id="GO:0002949">
    <property type="term" value="P:tRNA threonylcarbamoyladenosine modification"/>
    <property type="evidence" value="ECO:0007669"/>
    <property type="project" value="UniProtKB-UniRule"/>
</dbReference>
<dbReference type="CDD" id="cd24133">
    <property type="entry name" value="ASKHA_NBD_TsaD_bac"/>
    <property type="match status" value="1"/>
</dbReference>
<dbReference type="FunFam" id="3.30.420.40:FF:000040">
    <property type="entry name" value="tRNA N6-adenosine threonylcarbamoyltransferase"/>
    <property type="match status" value="1"/>
</dbReference>
<dbReference type="Gene3D" id="3.30.420.40">
    <property type="match status" value="2"/>
</dbReference>
<dbReference type="HAMAP" id="MF_01445">
    <property type="entry name" value="TsaD"/>
    <property type="match status" value="1"/>
</dbReference>
<dbReference type="InterPro" id="IPR043129">
    <property type="entry name" value="ATPase_NBD"/>
</dbReference>
<dbReference type="InterPro" id="IPR000905">
    <property type="entry name" value="Gcp-like_dom"/>
</dbReference>
<dbReference type="InterPro" id="IPR017861">
    <property type="entry name" value="KAE1/TsaD"/>
</dbReference>
<dbReference type="InterPro" id="IPR017860">
    <property type="entry name" value="Peptidase_M22_CS"/>
</dbReference>
<dbReference type="InterPro" id="IPR022450">
    <property type="entry name" value="TsaD"/>
</dbReference>
<dbReference type="NCBIfam" id="TIGR00329">
    <property type="entry name" value="gcp_kae1"/>
    <property type="match status" value="1"/>
</dbReference>
<dbReference type="NCBIfam" id="TIGR03723">
    <property type="entry name" value="T6A_TsaD_YgjD"/>
    <property type="match status" value="1"/>
</dbReference>
<dbReference type="PANTHER" id="PTHR11735">
    <property type="entry name" value="TRNA N6-ADENOSINE THREONYLCARBAMOYLTRANSFERASE"/>
    <property type="match status" value="1"/>
</dbReference>
<dbReference type="PANTHER" id="PTHR11735:SF6">
    <property type="entry name" value="TRNA N6-ADENOSINE THREONYLCARBAMOYLTRANSFERASE, MITOCHONDRIAL"/>
    <property type="match status" value="1"/>
</dbReference>
<dbReference type="Pfam" id="PF00814">
    <property type="entry name" value="TsaD"/>
    <property type="match status" value="1"/>
</dbReference>
<dbReference type="PRINTS" id="PR00789">
    <property type="entry name" value="OSIALOPTASE"/>
</dbReference>
<dbReference type="SUPFAM" id="SSF53067">
    <property type="entry name" value="Actin-like ATPase domain"/>
    <property type="match status" value="2"/>
</dbReference>
<dbReference type="PROSITE" id="PS01016">
    <property type="entry name" value="GLYCOPROTEASE"/>
    <property type="match status" value="1"/>
</dbReference>
<feature type="chain" id="PRO_1000145942" description="tRNA N6-adenosine threonylcarbamoyltransferase">
    <location>
        <begin position="1"/>
        <end position="336"/>
    </location>
</feature>
<feature type="binding site" evidence="1">
    <location>
        <position position="111"/>
    </location>
    <ligand>
        <name>Fe cation</name>
        <dbReference type="ChEBI" id="CHEBI:24875"/>
    </ligand>
</feature>
<feature type="binding site" evidence="1">
    <location>
        <position position="115"/>
    </location>
    <ligand>
        <name>Fe cation</name>
        <dbReference type="ChEBI" id="CHEBI:24875"/>
    </ligand>
</feature>
<feature type="binding site" evidence="1">
    <location>
        <begin position="134"/>
        <end position="138"/>
    </location>
    <ligand>
        <name>substrate</name>
    </ligand>
</feature>
<feature type="binding site" evidence="1">
    <location>
        <position position="167"/>
    </location>
    <ligand>
        <name>substrate</name>
    </ligand>
</feature>
<feature type="binding site" evidence="1">
    <location>
        <position position="180"/>
    </location>
    <ligand>
        <name>substrate</name>
    </ligand>
</feature>
<feature type="binding site" evidence="1">
    <location>
        <position position="270"/>
    </location>
    <ligand>
        <name>substrate</name>
    </ligand>
</feature>
<feature type="binding site" evidence="1">
    <location>
        <position position="298"/>
    </location>
    <ligand>
        <name>Fe cation</name>
        <dbReference type="ChEBI" id="CHEBI:24875"/>
    </ligand>
</feature>
<accession>B0V811</accession>
<proteinExistence type="inferred from homology"/>
<organism>
    <name type="scientific">Acinetobacter baumannii (strain AYE)</name>
    <dbReference type="NCBI Taxonomy" id="509173"/>
    <lineage>
        <taxon>Bacteria</taxon>
        <taxon>Pseudomonadati</taxon>
        <taxon>Pseudomonadota</taxon>
        <taxon>Gammaproteobacteria</taxon>
        <taxon>Moraxellales</taxon>
        <taxon>Moraxellaceae</taxon>
        <taxon>Acinetobacter</taxon>
        <taxon>Acinetobacter calcoaceticus/baumannii complex</taxon>
    </lineage>
</organism>
<protein>
    <recommendedName>
        <fullName evidence="1">tRNA N6-adenosine threonylcarbamoyltransferase</fullName>
        <ecNumber evidence="1">2.3.1.234</ecNumber>
    </recommendedName>
    <alternativeName>
        <fullName evidence="1">N6-L-threonylcarbamoyladenine synthase</fullName>
        <shortName evidence="1">t(6)A synthase</shortName>
    </alternativeName>
    <alternativeName>
        <fullName evidence="1">t(6)A37 threonylcarbamoyladenosine biosynthesis protein TsaD</fullName>
    </alternativeName>
    <alternativeName>
        <fullName evidence="1">tRNA threonylcarbamoyladenosine biosynthesis protein TsaD</fullName>
    </alternativeName>
</protein>
<sequence>MIVLGLETSCDETGLALYDSELGLRGQVLYSQIKLHAEYGGVVPELASRDHVRKLIPLMNQLLEQSGVKKQEIDAVAYTRGPGLMGALMTGALFGRTLAFSLNKPAIGVHHMEGHMLAPLLSSQPPEFPFVALLVSGGHTQLMAAHGIGQYELLGESIDDAAGEAFDKVAKMMNLPYPGGPNIAKLALSGDPLAFEFPRPMLHQGLDFSFSGLKTAVSVQLKKLNGENRDADIAASFQEAIVDTLVKKSVKALKQTGLKRLVIAGGVSANLRLREQLETSLAKIKAQVYYAEPALCTDNGAMIAFAGYQRLKAGQHDGLAVTTTPRWPMTELTIPE</sequence>
<evidence type="ECO:0000255" key="1">
    <source>
        <dbReference type="HAMAP-Rule" id="MF_01445"/>
    </source>
</evidence>
<keyword id="KW-0012">Acyltransferase</keyword>
<keyword id="KW-0963">Cytoplasm</keyword>
<keyword id="KW-0408">Iron</keyword>
<keyword id="KW-0479">Metal-binding</keyword>
<keyword id="KW-0808">Transferase</keyword>
<keyword id="KW-0819">tRNA processing</keyword>
<name>TSAD_ACIBY</name>
<gene>
    <name evidence="1" type="primary">tsaD</name>
    <name type="synonym">gcp</name>
    <name type="ordered locus">ABAYE1288</name>
</gene>
<reference key="1">
    <citation type="journal article" date="2008" name="PLoS ONE">
        <title>Comparative analysis of Acinetobacters: three genomes for three lifestyles.</title>
        <authorList>
            <person name="Vallenet D."/>
            <person name="Nordmann P."/>
            <person name="Barbe V."/>
            <person name="Poirel L."/>
            <person name="Mangenot S."/>
            <person name="Bataille E."/>
            <person name="Dossat C."/>
            <person name="Gas S."/>
            <person name="Kreimeyer A."/>
            <person name="Lenoble P."/>
            <person name="Oztas S."/>
            <person name="Poulain J."/>
            <person name="Segurens B."/>
            <person name="Robert C."/>
            <person name="Abergel C."/>
            <person name="Claverie J.-M."/>
            <person name="Raoult D."/>
            <person name="Medigue C."/>
            <person name="Weissenbach J."/>
            <person name="Cruveiller S."/>
        </authorList>
    </citation>
    <scope>NUCLEOTIDE SEQUENCE [LARGE SCALE GENOMIC DNA]</scope>
    <source>
        <strain>AYE</strain>
    </source>
</reference>